<name>RK22_CHAVU</name>
<reference key="1">
    <citation type="journal article" date="2006" name="Mol. Biol. Evol.">
        <title>The chloroplast genome sequence of Chara vulgaris sheds new light into the closest green algal relatives of land plants.</title>
        <authorList>
            <person name="Turmel M."/>
            <person name="Otis C."/>
            <person name="Lemieux C."/>
        </authorList>
    </citation>
    <scope>NUCLEOTIDE SEQUENCE [LARGE SCALE GENOMIC DNA]</scope>
</reference>
<feature type="chain" id="PRO_0000276441" description="Large ribosomal subunit protein uL22c">
    <location>
        <begin position="1"/>
        <end position="123"/>
    </location>
</feature>
<keyword id="KW-0150">Chloroplast</keyword>
<keyword id="KW-0934">Plastid</keyword>
<keyword id="KW-0687">Ribonucleoprotein</keyword>
<keyword id="KW-0689">Ribosomal protein</keyword>
<keyword id="KW-0694">RNA-binding</keyword>
<keyword id="KW-0699">rRNA-binding</keyword>
<geneLocation type="chloroplast"/>
<sequence>MNQKQEDFSPSVKASLKSLNISFHKTRKVVNQIRGCSYEKALMILEFMPYRACKPITQLISSAASNANHNLGLKKKNLFISEAKVDEGTTIKRFQPRAQGRAYSIHKPTCHITIGMKSKNKIQ</sequence>
<gene>
    <name type="primary">rpl22</name>
</gene>
<dbReference type="EMBL" id="DQ229107">
    <property type="protein sequence ID" value="ABA61918.1"/>
    <property type="molecule type" value="Genomic_DNA"/>
</dbReference>
<dbReference type="RefSeq" id="YP_635789.1">
    <property type="nucleotide sequence ID" value="NC_008097.1"/>
</dbReference>
<dbReference type="SMR" id="Q1ACF8"/>
<dbReference type="GeneID" id="4100288"/>
<dbReference type="GO" id="GO:0009507">
    <property type="term" value="C:chloroplast"/>
    <property type="evidence" value="ECO:0007669"/>
    <property type="project" value="UniProtKB-SubCell"/>
</dbReference>
<dbReference type="GO" id="GO:0015934">
    <property type="term" value="C:large ribosomal subunit"/>
    <property type="evidence" value="ECO:0007669"/>
    <property type="project" value="InterPro"/>
</dbReference>
<dbReference type="GO" id="GO:0019843">
    <property type="term" value="F:rRNA binding"/>
    <property type="evidence" value="ECO:0007669"/>
    <property type="project" value="UniProtKB-UniRule"/>
</dbReference>
<dbReference type="GO" id="GO:0003735">
    <property type="term" value="F:structural constituent of ribosome"/>
    <property type="evidence" value="ECO:0007669"/>
    <property type="project" value="InterPro"/>
</dbReference>
<dbReference type="GO" id="GO:0006412">
    <property type="term" value="P:translation"/>
    <property type="evidence" value="ECO:0007669"/>
    <property type="project" value="UniProtKB-UniRule"/>
</dbReference>
<dbReference type="CDD" id="cd00336">
    <property type="entry name" value="Ribosomal_L22"/>
    <property type="match status" value="1"/>
</dbReference>
<dbReference type="Gene3D" id="3.90.470.10">
    <property type="entry name" value="Ribosomal protein L22/L17"/>
    <property type="match status" value="1"/>
</dbReference>
<dbReference type="HAMAP" id="MF_01331_B">
    <property type="entry name" value="Ribosomal_uL22_B"/>
    <property type="match status" value="1"/>
</dbReference>
<dbReference type="InterPro" id="IPR001063">
    <property type="entry name" value="Ribosomal_uL22"/>
</dbReference>
<dbReference type="InterPro" id="IPR005727">
    <property type="entry name" value="Ribosomal_uL22_bac/chlpt-type"/>
</dbReference>
<dbReference type="InterPro" id="IPR047867">
    <property type="entry name" value="Ribosomal_uL22_bac/org-type"/>
</dbReference>
<dbReference type="InterPro" id="IPR018260">
    <property type="entry name" value="Ribosomal_uL22_CS"/>
</dbReference>
<dbReference type="InterPro" id="IPR036394">
    <property type="entry name" value="Ribosomal_uL22_sf"/>
</dbReference>
<dbReference type="NCBIfam" id="TIGR01044">
    <property type="entry name" value="rplV_bact"/>
    <property type="match status" value="1"/>
</dbReference>
<dbReference type="PANTHER" id="PTHR13501">
    <property type="entry name" value="CHLOROPLAST 50S RIBOSOMAL PROTEIN L22-RELATED"/>
    <property type="match status" value="1"/>
</dbReference>
<dbReference type="PANTHER" id="PTHR13501:SF10">
    <property type="entry name" value="LARGE RIBOSOMAL SUBUNIT PROTEIN UL22M"/>
    <property type="match status" value="1"/>
</dbReference>
<dbReference type="Pfam" id="PF00237">
    <property type="entry name" value="Ribosomal_L22"/>
    <property type="match status" value="1"/>
</dbReference>
<dbReference type="SUPFAM" id="SSF54843">
    <property type="entry name" value="Ribosomal protein L22"/>
    <property type="match status" value="1"/>
</dbReference>
<dbReference type="PROSITE" id="PS00464">
    <property type="entry name" value="RIBOSOMAL_L22"/>
    <property type="match status" value="1"/>
</dbReference>
<evidence type="ECO:0000250" key="1"/>
<evidence type="ECO:0000305" key="2"/>
<protein>
    <recommendedName>
        <fullName evidence="2">Large ribosomal subunit protein uL22c</fullName>
    </recommendedName>
    <alternativeName>
        <fullName>50S ribosomal protein L22, chloroplastic</fullName>
    </alternativeName>
</protein>
<proteinExistence type="inferred from homology"/>
<organism>
    <name type="scientific">Chara vulgaris</name>
    <name type="common">Common stonewort</name>
    <dbReference type="NCBI Taxonomy" id="55564"/>
    <lineage>
        <taxon>Eukaryota</taxon>
        <taxon>Viridiplantae</taxon>
        <taxon>Streptophyta</taxon>
        <taxon>Charophyceae</taxon>
        <taxon>Charales</taxon>
        <taxon>Characeae</taxon>
        <taxon>Chara</taxon>
    </lineage>
</organism>
<comment type="function">
    <text evidence="1">This protein binds specifically to 23S rRNA.</text>
</comment>
<comment type="function">
    <text evidence="1">The globular domain of the protein is located near the polypeptide exit tunnel on the outside of the subunit, while an extended beta-hairpin is found that lines the wall of the exit tunnel in the center of the 70S ribosome.</text>
</comment>
<comment type="subunit">
    <text evidence="1">Part of the 50S ribosomal subunit.</text>
</comment>
<comment type="subcellular location">
    <subcellularLocation>
        <location>Plastid</location>
        <location>Chloroplast</location>
    </subcellularLocation>
</comment>
<comment type="similarity">
    <text evidence="2">Belongs to the universal ribosomal protein uL22 family.</text>
</comment>
<accession>Q1ACF8</accession>